<keyword id="KW-0378">Hydrolase</keyword>
<keyword id="KW-0460">Magnesium</keyword>
<organism>
    <name type="scientific">Salmonella schwarzengrund (strain CVM19633)</name>
    <dbReference type="NCBI Taxonomy" id="439843"/>
    <lineage>
        <taxon>Bacteria</taxon>
        <taxon>Pseudomonadati</taxon>
        <taxon>Pseudomonadota</taxon>
        <taxon>Gammaproteobacteria</taxon>
        <taxon>Enterobacterales</taxon>
        <taxon>Enterobacteriaceae</taxon>
        <taxon>Salmonella</taxon>
    </lineage>
</organism>
<sequence>MASIDFRNKINWHRRYRSPQGVKTEHEILRIFESDRGRIINSPAIRRLQQKTQVFPLERNAAVRTRLTHSMEVQQVGRYIAKEILSRLKEQNRLEEYGLDALTGPFESIVEMACLMHDIGNPPFGHFGEAAINDWFRQRLHPEDAESQPLTHDRCVVSSLRLQEGEENLNDIRRKVRQDICHFEGNAQGIRLVHTLMRMNLTWAQVGGILKYTRPAWWRGPVPDSHRYLMKKPGYYLSEEKYIARLRKELQLAPYSRFPLTWIMEAADDISYCVADLEDAVEKRIFSVEQLYHHLYHAWGHHEKDSLFELVVGNAWEKSRANTLSRSTEDQFFMYLRVNTLNKLVPYAAQRFIDNLPQIFAGTFNQALLEDASGFSRLLELYKNVAVEHVFSHPDVEQLELQGYRVISGLLDIYQPLLSLSLNDFRELVEKERLKRFPIESRLFQKLSTRHRLAYVEVVSKLPTDSAEYPVLEYYYRCRLIQDYISGMTDLYAWDEYRRLMAVEQ</sequence>
<name>DGTP_SALSV</name>
<feature type="chain" id="PRO_1000090265" description="Deoxyguanosinetriphosphate triphosphohydrolase">
    <location>
        <begin position="1"/>
        <end position="505"/>
    </location>
</feature>
<feature type="domain" description="HD" evidence="2">
    <location>
        <begin position="66"/>
        <end position="273"/>
    </location>
</feature>
<reference key="1">
    <citation type="journal article" date="2011" name="J. Bacteriol.">
        <title>Comparative genomics of 28 Salmonella enterica isolates: evidence for CRISPR-mediated adaptive sublineage evolution.</title>
        <authorList>
            <person name="Fricke W.F."/>
            <person name="Mammel M.K."/>
            <person name="McDermott P.F."/>
            <person name="Tartera C."/>
            <person name="White D.G."/>
            <person name="Leclerc J.E."/>
            <person name="Ravel J."/>
            <person name="Cebula T.A."/>
        </authorList>
    </citation>
    <scope>NUCLEOTIDE SEQUENCE [LARGE SCALE GENOMIC DNA]</scope>
    <source>
        <strain>CVM19633</strain>
    </source>
</reference>
<protein>
    <recommendedName>
        <fullName evidence="1">Deoxyguanosinetriphosphate triphosphohydrolase</fullName>
        <shortName evidence="1">dGTP triphosphohydrolase</shortName>
        <shortName evidence="1">dGTPase</shortName>
        <ecNumber evidence="1">3.1.5.1</ecNumber>
    </recommendedName>
</protein>
<accession>B4TXR2</accession>
<gene>
    <name evidence="1" type="primary">dgt</name>
    <name type="ordered locus">SeSA_A0231</name>
</gene>
<evidence type="ECO:0000255" key="1">
    <source>
        <dbReference type="HAMAP-Rule" id="MF_00030"/>
    </source>
</evidence>
<evidence type="ECO:0000255" key="2">
    <source>
        <dbReference type="PROSITE-ProRule" id="PRU01175"/>
    </source>
</evidence>
<comment type="function">
    <text evidence="1">dGTPase preferentially hydrolyzes dGTP over the other canonical NTPs.</text>
</comment>
<comment type="catalytic activity">
    <reaction evidence="1">
        <text>dGTP + H2O = 2'-deoxyguanosine + triphosphate + H(+)</text>
        <dbReference type="Rhea" id="RHEA:15193"/>
        <dbReference type="ChEBI" id="CHEBI:15377"/>
        <dbReference type="ChEBI" id="CHEBI:15378"/>
        <dbReference type="ChEBI" id="CHEBI:17172"/>
        <dbReference type="ChEBI" id="CHEBI:18036"/>
        <dbReference type="ChEBI" id="CHEBI:61429"/>
        <dbReference type="EC" id="3.1.5.1"/>
    </reaction>
</comment>
<comment type="cofactor">
    <cofactor evidence="1">
        <name>Mg(2+)</name>
        <dbReference type="ChEBI" id="CHEBI:18420"/>
    </cofactor>
</comment>
<comment type="subunit">
    <text evidence="1">Homotetramer.</text>
</comment>
<comment type="similarity">
    <text evidence="1">Belongs to the dGTPase family. Type 1 subfamily.</text>
</comment>
<dbReference type="EC" id="3.1.5.1" evidence="1"/>
<dbReference type="EMBL" id="CP001127">
    <property type="protein sequence ID" value="ACF91985.1"/>
    <property type="molecule type" value="Genomic_DNA"/>
</dbReference>
<dbReference type="RefSeq" id="WP_000146450.1">
    <property type="nucleotide sequence ID" value="NC_011094.1"/>
</dbReference>
<dbReference type="SMR" id="B4TXR2"/>
<dbReference type="KEGG" id="sew:SeSA_A0231"/>
<dbReference type="HOGENOM" id="CLU_028163_2_1_6"/>
<dbReference type="Proteomes" id="UP000001865">
    <property type="component" value="Chromosome"/>
</dbReference>
<dbReference type="GO" id="GO:0008832">
    <property type="term" value="F:dGTPase activity"/>
    <property type="evidence" value="ECO:0007669"/>
    <property type="project" value="UniProtKB-UniRule"/>
</dbReference>
<dbReference type="GO" id="GO:0000287">
    <property type="term" value="F:magnesium ion binding"/>
    <property type="evidence" value="ECO:0007669"/>
    <property type="project" value="UniProtKB-UniRule"/>
</dbReference>
<dbReference type="GO" id="GO:0006203">
    <property type="term" value="P:dGTP catabolic process"/>
    <property type="evidence" value="ECO:0007669"/>
    <property type="project" value="InterPro"/>
</dbReference>
<dbReference type="CDD" id="cd00077">
    <property type="entry name" value="HDc"/>
    <property type="match status" value="1"/>
</dbReference>
<dbReference type="FunFam" id="1.10.3210.10:FF:000009">
    <property type="entry name" value="Deoxyguanosinetriphosphate triphosphohydrolase"/>
    <property type="match status" value="1"/>
</dbReference>
<dbReference type="FunFam" id="1.10.3210.10:FF:000010">
    <property type="entry name" value="Deoxyguanosinetriphosphate triphosphohydrolase"/>
    <property type="match status" value="1"/>
</dbReference>
<dbReference type="FunFam" id="1.10.3410.10:FF:000001">
    <property type="entry name" value="Deoxyguanosinetriphosphate triphosphohydrolase"/>
    <property type="match status" value="1"/>
</dbReference>
<dbReference type="Gene3D" id="1.10.3210.10">
    <property type="entry name" value="Hypothetical protein af1432"/>
    <property type="match status" value="3"/>
</dbReference>
<dbReference type="Gene3D" id="1.10.3410.10">
    <property type="entry name" value="putative deoxyguanosinetriphosphate triphosphohydrolase like domain"/>
    <property type="match status" value="1"/>
</dbReference>
<dbReference type="HAMAP" id="MF_00030">
    <property type="entry name" value="dGTPase_type1"/>
    <property type="match status" value="1"/>
</dbReference>
<dbReference type="InterPro" id="IPR023293">
    <property type="entry name" value="dGTP_triP_hydro_central_sf"/>
</dbReference>
<dbReference type="InterPro" id="IPR006261">
    <property type="entry name" value="dGTPase"/>
</dbReference>
<dbReference type="InterPro" id="IPR050135">
    <property type="entry name" value="dGTPase-like"/>
</dbReference>
<dbReference type="InterPro" id="IPR020779">
    <property type="entry name" value="dNTPase_1"/>
</dbReference>
<dbReference type="InterPro" id="IPR003607">
    <property type="entry name" value="HD/PDEase_dom"/>
</dbReference>
<dbReference type="InterPro" id="IPR006674">
    <property type="entry name" value="HD_domain"/>
</dbReference>
<dbReference type="NCBIfam" id="TIGR01353">
    <property type="entry name" value="dGTP_triPase"/>
    <property type="match status" value="1"/>
</dbReference>
<dbReference type="NCBIfam" id="NF003429">
    <property type="entry name" value="PRK04926.1"/>
    <property type="match status" value="1"/>
</dbReference>
<dbReference type="PANTHER" id="PTHR11373:SF32">
    <property type="entry name" value="DEOXYGUANOSINETRIPHOSPHATE TRIPHOSPHOHYDROLASE"/>
    <property type="match status" value="1"/>
</dbReference>
<dbReference type="PANTHER" id="PTHR11373">
    <property type="entry name" value="DEOXYNUCLEOSIDE TRIPHOSPHATE TRIPHOSPHOHYDROLASE"/>
    <property type="match status" value="1"/>
</dbReference>
<dbReference type="Pfam" id="PF01966">
    <property type="entry name" value="HD"/>
    <property type="match status" value="1"/>
</dbReference>
<dbReference type="SMART" id="SM00471">
    <property type="entry name" value="HDc"/>
    <property type="match status" value="1"/>
</dbReference>
<dbReference type="SUPFAM" id="SSF109604">
    <property type="entry name" value="HD-domain/PDEase-like"/>
    <property type="match status" value="1"/>
</dbReference>
<dbReference type="PROSITE" id="PS51831">
    <property type="entry name" value="HD"/>
    <property type="match status" value="1"/>
</dbReference>
<proteinExistence type="inferred from homology"/>